<organism>
    <name type="scientific">Bacillus cereus (strain G9842)</name>
    <dbReference type="NCBI Taxonomy" id="405531"/>
    <lineage>
        <taxon>Bacteria</taxon>
        <taxon>Bacillati</taxon>
        <taxon>Bacillota</taxon>
        <taxon>Bacilli</taxon>
        <taxon>Bacillales</taxon>
        <taxon>Bacillaceae</taxon>
        <taxon>Bacillus</taxon>
        <taxon>Bacillus cereus group</taxon>
    </lineage>
</organism>
<sequence length="272" mass="30043">MTLQEQIMKALHVQPVIDPKVEIRKRVDFLKDYVKKTGAKGFVLGISGGQDSTLAGRLAQLAVEEIRNEGGNATFIAVRLPYKVQKDEDDAQLALQFIQADQSTAFDIASTVDAFSNQYENLLGESLTDFNKGNVKARIRMVTQYAIGGQKGLLVIGTDHAAEAVTGFFTKFGDGGADLLPLTGLTKRQGRALLQELGADERLYLKMPTADLLDEKPGQADETELGITYDQLDDYLEGKAVPADVAEKIEKRYTVSEHKRQVPASMFDDWWK</sequence>
<dbReference type="EC" id="6.3.1.5" evidence="1"/>
<dbReference type="EMBL" id="CP001186">
    <property type="protein sequence ID" value="ACK95102.1"/>
    <property type="molecule type" value="Genomic_DNA"/>
</dbReference>
<dbReference type="RefSeq" id="WP_000174897.1">
    <property type="nucleotide sequence ID" value="NC_011772.1"/>
</dbReference>
<dbReference type="SMR" id="B7ITB1"/>
<dbReference type="KEGG" id="bcg:BCG9842_B3329"/>
<dbReference type="HOGENOM" id="CLU_059327_3_0_9"/>
<dbReference type="UniPathway" id="UPA00253">
    <property type="reaction ID" value="UER00333"/>
</dbReference>
<dbReference type="Proteomes" id="UP000006744">
    <property type="component" value="Chromosome"/>
</dbReference>
<dbReference type="GO" id="GO:0005737">
    <property type="term" value="C:cytoplasm"/>
    <property type="evidence" value="ECO:0007669"/>
    <property type="project" value="InterPro"/>
</dbReference>
<dbReference type="GO" id="GO:0005524">
    <property type="term" value="F:ATP binding"/>
    <property type="evidence" value="ECO:0007669"/>
    <property type="project" value="UniProtKB-UniRule"/>
</dbReference>
<dbReference type="GO" id="GO:0004359">
    <property type="term" value="F:glutaminase activity"/>
    <property type="evidence" value="ECO:0007669"/>
    <property type="project" value="InterPro"/>
</dbReference>
<dbReference type="GO" id="GO:0046872">
    <property type="term" value="F:metal ion binding"/>
    <property type="evidence" value="ECO:0007669"/>
    <property type="project" value="UniProtKB-KW"/>
</dbReference>
<dbReference type="GO" id="GO:0003952">
    <property type="term" value="F:NAD+ synthase (glutamine-hydrolyzing) activity"/>
    <property type="evidence" value="ECO:0007669"/>
    <property type="project" value="InterPro"/>
</dbReference>
<dbReference type="GO" id="GO:0008795">
    <property type="term" value="F:NAD+ synthase activity"/>
    <property type="evidence" value="ECO:0007669"/>
    <property type="project" value="UniProtKB-UniRule"/>
</dbReference>
<dbReference type="GO" id="GO:0009435">
    <property type="term" value="P:NAD biosynthetic process"/>
    <property type="evidence" value="ECO:0007669"/>
    <property type="project" value="UniProtKB-UniRule"/>
</dbReference>
<dbReference type="CDD" id="cd00553">
    <property type="entry name" value="NAD_synthase"/>
    <property type="match status" value="1"/>
</dbReference>
<dbReference type="FunFam" id="3.40.50.620:FF:000015">
    <property type="entry name" value="NH(3)-dependent NAD(+) synthetase"/>
    <property type="match status" value="1"/>
</dbReference>
<dbReference type="Gene3D" id="3.40.50.620">
    <property type="entry name" value="HUPs"/>
    <property type="match status" value="1"/>
</dbReference>
<dbReference type="HAMAP" id="MF_00193">
    <property type="entry name" value="NadE_ammonia_dep"/>
    <property type="match status" value="1"/>
</dbReference>
<dbReference type="InterPro" id="IPR022310">
    <property type="entry name" value="NAD/GMP_synthase"/>
</dbReference>
<dbReference type="InterPro" id="IPR003694">
    <property type="entry name" value="NAD_synthase"/>
</dbReference>
<dbReference type="InterPro" id="IPR022926">
    <property type="entry name" value="NH(3)-dep_NAD(+)_synth"/>
</dbReference>
<dbReference type="InterPro" id="IPR014729">
    <property type="entry name" value="Rossmann-like_a/b/a_fold"/>
</dbReference>
<dbReference type="NCBIfam" id="TIGR00552">
    <property type="entry name" value="nadE"/>
    <property type="match status" value="1"/>
</dbReference>
<dbReference type="NCBIfam" id="NF001979">
    <property type="entry name" value="PRK00768.1"/>
    <property type="match status" value="1"/>
</dbReference>
<dbReference type="PANTHER" id="PTHR23090">
    <property type="entry name" value="NH 3 /GLUTAMINE-DEPENDENT NAD + SYNTHETASE"/>
    <property type="match status" value="1"/>
</dbReference>
<dbReference type="PANTHER" id="PTHR23090:SF7">
    <property type="entry name" value="NH(3)-DEPENDENT NAD(+) SYNTHETASE"/>
    <property type="match status" value="1"/>
</dbReference>
<dbReference type="Pfam" id="PF02540">
    <property type="entry name" value="NAD_synthase"/>
    <property type="match status" value="1"/>
</dbReference>
<dbReference type="SUPFAM" id="SSF52402">
    <property type="entry name" value="Adenine nucleotide alpha hydrolases-like"/>
    <property type="match status" value="1"/>
</dbReference>
<feature type="chain" id="PRO_1000118614" description="NH(3)-dependent NAD(+) synthetase">
    <location>
        <begin position="1"/>
        <end position="272"/>
    </location>
</feature>
<feature type="binding site" evidence="1">
    <location>
        <begin position="45"/>
        <end position="52"/>
    </location>
    <ligand>
        <name>ATP</name>
        <dbReference type="ChEBI" id="CHEBI:30616"/>
    </ligand>
</feature>
<feature type="binding site" evidence="1">
    <location>
        <position position="51"/>
    </location>
    <ligand>
        <name>Mg(2+)</name>
        <dbReference type="ChEBI" id="CHEBI:18420"/>
    </ligand>
</feature>
<feature type="binding site" evidence="1">
    <location>
        <position position="138"/>
    </location>
    <ligand>
        <name>deamido-NAD(+)</name>
        <dbReference type="ChEBI" id="CHEBI:58437"/>
    </ligand>
</feature>
<feature type="binding site" evidence="1">
    <location>
        <position position="158"/>
    </location>
    <ligand>
        <name>ATP</name>
        <dbReference type="ChEBI" id="CHEBI:30616"/>
    </ligand>
</feature>
<feature type="binding site" evidence="1">
    <location>
        <position position="163"/>
    </location>
    <ligand>
        <name>Mg(2+)</name>
        <dbReference type="ChEBI" id="CHEBI:18420"/>
    </ligand>
</feature>
<feature type="binding site" evidence="1">
    <location>
        <position position="171"/>
    </location>
    <ligand>
        <name>deamido-NAD(+)</name>
        <dbReference type="ChEBI" id="CHEBI:58437"/>
    </ligand>
</feature>
<feature type="binding site" evidence="1">
    <location>
        <position position="178"/>
    </location>
    <ligand>
        <name>deamido-NAD(+)</name>
        <dbReference type="ChEBI" id="CHEBI:58437"/>
    </ligand>
</feature>
<feature type="binding site" evidence="1">
    <location>
        <position position="187"/>
    </location>
    <ligand>
        <name>ATP</name>
        <dbReference type="ChEBI" id="CHEBI:30616"/>
    </ligand>
</feature>
<feature type="binding site" evidence="1">
    <location>
        <position position="209"/>
    </location>
    <ligand>
        <name>ATP</name>
        <dbReference type="ChEBI" id="CHEBI:30616"/>
    </ligand>
</feature>
<feature type="binding site" evidence="1">
    <location>
        <begin position="258"/>
        <end position="259"/>
    </location>
    <ligand>
        <name>deamido-NAD(+)</name>
        <dbReference type="ChEBI" id="CHEBI:58437"/>
    </ligand>
</feature>
<proteinExistence type="inferred from homology"/>
<reference key="1">
    <citation type="submission" date="2008-10" db="EMBL/GenBank/DDBJ databases">
        <title>Genome sequence of Bacillus cereus G9842.</title>
        <authorList>
            <person name="Dodson R.J."/>
            <person name="Durkin A.S."/>
            <person name="Rosovitz M.J."/>
            <person name="Rasko D.A."/>
            <person name="Hoffmaster A."/>
            <person name="Ravel J."/>
            <person name="Sutton G."/>
        </authorList>
    </citation>
    <scope>NUCLEOTIDE SEQUENCE [LARGE SCALE GENOMIC DNA]</scope>
    <source>
        <strain>G9842</strain>
    </source>
</reference>
<evidence type="ECO:0000255" key="1">
    <source>
        <dbReference type="HAMAP-Rule" id="MF_00193"/>
    </source>
</evidence>
<gene>
    <name evidence="1" type="primary">nadE</name>
    <name type="ordered locus">BCG9842_B3329</name>
</gene>
<comment type="function">
    <text evidence="1">Catalyzes the ATP-dependent amidation of deamido-NAD to form NAD. Uses ammonia as a nitrogen source.</text>
</comment>
<comment type="catalytic activity">
    <reaction evidence="1">
        <text>deamido-NAD(+) + NH4(+) + ATP = AMP + diphosphate + NAD(+) + H(+)</text>
        <dbReference type="Rhea" id="RHEA:21188"/>
        <dbReference type="ChEBI" id="CHEBI:15378"/>
        <dbReference type="ChEBI" id="CHEBI:28938"/>
        <dbReference type="ChEBI" id="CHEBI:30616"/>
        <dbReference type="ChEBI" id="CHEBI:33019"/>
        <dbReference type="ChEBI" id="CHEBI:57540"/>
        <dbReference type="ChEBI" id="CHEBI:58437"/>
        <dbReference type="ChEBI" id="CHEBI:456215"/>
        <dbReference type="EC" id="6.3.1.5"/>
    </reaction>
</comment>
<comment type="pathway">
    <text evidence="1">Cofactor biosynthesis; NAD(+) biosynthesis; NAD(+) from deamido-NAD(+) (ammonia route): step 1/1.</text>
</comment>
<comment type="subunit">
    <text evidence="1">Homodimer.</text>
</comment>
<comment type="similarity">
    <text evidence="1">Belongs to the NAD synthetase family.</text>
</comment>
<name>NADE_BACC2</name>
<accession>B7ITB1</accession>
<protein>
    <recommendedName>
        <fullName evidence="1">NH(3)-dependent NAD(+) synthetase</fullName>
        <ecNumber evidence="1">6.3.1.5</ecNumber>
    </recommendedName>
</protein>
<keyword id="KW-0067">ATP-binding</keyword>
<keyword id="KW-0436">Ligase</keyword>
<keyword id="KW-0460">Magnesium</keyword>
<keyword id="KW-0479">Metal-binding</keyword>
<keyword id="KW-0520">NAD</keyword>
<keyword id="KW-0547">Nucleotide-binding</keyword>